<keyword id="KW-0002">3D-structure</keyword>
<keyword id="KW-0963">Cytoplasm</keyword>
<keyword id="KW-0240">DNA-directed RNA polymerase</keyword>
<keyword id="KW-0548">Nucleotidyltransferase</keyword>
<keyword id="KW-1185">Reference proteome</keyword>
<keyword id="KW-0804">Transcription</keyword>
<keyword id="KW-0808">Transferase</keyword>
<name>RPO6_SACS2</name>
<accession>Q97ZJ9</accession>
<sequence>MGLERDEILSQDLHFNEVFISLWQNRLTRYEIARVISARALQLAMGAPALIDINNLSSTDVISIAEEEFRRGVLPITIRRRLPNGKIILLSLRKS</sequence>
<gene>
    <name evidence="1" type="primary">rpo6</name>
    <name type="synonym">rpoK</name>
    <name type="ordered locus">SSO6768</name>
</gene>
<evidence type="ECO:0000255" key="1">
    <source>
        <dbReference type="HAMAP-Rule" id="MF_00192"/>
    </source>
</evidence>
<evidence type="ECO:0000269" key="2">
    <source>
    </source>
</evidence>
<evidence type="ECO:0000303" key="3">
    <source>
    </source>
</evidence>
<evidence type="ECO:0007744" key="4">
    <source>
        <dbReference type="PDB" id="2PMZ"/>
    </source>
</evidence>
<evidence type="ECO:0007744" key="5">
    <source>
        <dbReference type="PDB" id="3HKZ"/>
    </source>
</evidence>
<evidence type="ECO:0007829" key="6">
    <source>
        <dbReference type="PDB" id="2PMZ"/>
    </source>
</evidence>
<organism>
    <name type="scientific">Saccharolobus solfataricus (strain ATCC 35092 / DSM 1617 / JCM 11322 / P2)</name>
    <name type="common">Sulfolobus solfataricus</name>
    <dbReference type="NCBI Taxonomy" id="273057"/>
    <lineage>
        <taxon>Archaea</taxon>
        <taxon>Thermoproteota</taxon>
        <taxon>Thermoprotei</taxon>
        <taxon>Sulfolobales</taxon>
        <taxon>Sulfolobaceae</taxon>
        <taxon>Saccharolobus</taxon>
    </lineage>
</organism>
<dbReference type="EC" id="2.7.7.6" evidence="1"/>
<dbReference type="EMBL" id="AE006641">
    <property type="protein sequence ID" value="AAK41189.1"/>
    <property type="molecule type" value="Genomic_DNA"/>
</dbReference>
<dbReference type="PIR" id="F90241">
    <property type="entry name" value="F90241"/>
</dbReference>
<dbReference type="RefSeq" id="WP_009992332.1">
    <property type="nucleotide sequence ID" value="NC_002754.1"/>
</dbReference>
<dbReference type="PDB" id="2PMZ">
    <property type="method" value="X-ray"/>
    <property type="resolution" value="3.40 A"/>
    <property type="chains" value="K/W=1-95"/>
</dbReference>
<dbReference type="PDB" id="3HKZ">
    <property type="method" value="X-ray"/>
    <property type="resolution" value="3.40 A"/>
    <property type="chains" value="K/U=1-95"/>
</dbReference>
<dbReference type="PDBsum" id="2PMZ"/>
<dbReference type="PDBsum" id="3HKZ"/>
<dbReference type="SMR" id="Q97ZJ9"/>
<dbReference type="DIP" id="DIP-60642N"/>
<dbReference type="FunCoup" id="Q97ZJ9">
    <property type="interactions" value="10"/>
</dbReference>
<dbReference type="IntAct" id="Q97ZJ9">
    <property type="interactions" value="1"/>
</dbReference>
<dbReference type="STRING" id="273057.SSO6768"/>
<dbReference type="PaxDb" id="273057-SSO6768"/>
<dbReference type="EnsemblBacteria" id="AAK41189">
    <property type="protein sequence ID" value="AAK41189"/>
    <property type="gene ID" value="SSO6768"/>
</dbReference>
<dbReference type="KEGG" id="sso:SSO6768"/>
<dbReference type="PATRIC" id="fig|273057.12.peg.909"/>
<dbReference type="eggNOG" id="arCOG01268">
    <property type="taxonomic scope" value="Archaea"/>
</dbReference>
<dbReference type="HOGENOM" id="CLU_112527_4_0_2"/>
<dbReference type="InParanoid" id="Q97ZJ9"/>
<dbReference type="PhylomeDB" id="Q97ZJ9"/>
<dbReference type="BRENDA" id="2.7.7.6">
    <property type="organism ID" value="6163"/>
</dbReference>
<dbReference type="EvolutionaryTrace" id="Q97ZJ9"/>
<dbReference type="Proteomes" id="UP000001974">
    <property type="component" value="Chromosome"/>
</dbReference>
<dbReference type="GO" id="GO:0005737">
    <property type="term" value="C:cytoplasm"/>
    <property type="evidence" value="ECO:0007669"/>
    <property type="project" value="UniProtKB-SubCell"/>
</dbReference>
<dbReference type="GO" id="GO:0000428">
    <property type="term" value="C:DNA-directed RNA polymerase complex"/>
    <property type="evidence" value="ECO:0000314"/>
    <property type="project" value="UniProtKB"/>
</dbReference>
<dbReference type="GO" id="GO:0003677">
    <property type="term" value="F:DNA binding"/>
    <property type="evidence" value="ECO:0007669"/>
    <property type="project" value="UniProtKB-UniRule"/>
</dbReference>
<dbReference type="GO" id="GO:0003899">
    <property type="term" value="F:DNA-directed RNA polymerase activity"/>
    <property type="evidence" value="ECO:0007669"/>
    <property type="project" value="UniProtKB-UniRule"/>
</dbReference>
<dbReference type="GO" id="GO:0006360">
    <property type="term" value="P:transcription by RNA polymerase I"/>
    <property type="evidence" value="ECO:0000318"/>
    <property type="project" value="GO_Central"/>
</dbReference>
<dbReference type="GO" id="GO:0006366">
    <property type="term" value="P:transcription by RNA polymerase II"/>
    <property type="evidence" value="ECO:0000318"/>
    <property type="project" value="GO_Central"/>
</dbReference>
<dbReference type="GO" id="GO:0042797">
    <property type="term" value="P:tRNA transcription by RNA polymerase III"/>
    <property type="evidence" value="ECO:0000318"/>
    <property type="project" value="GO_Central"/>
</dbReference>
<dbReference type="Gene3D" id="3.90.940.10">
    <property type="match status" value="1"/>
</dbReference>
<dbReference type="HAMAP" id="MF_00192">
    <property type="entry name" value="RNApol_arch_Rpo6"/>
    <property type="match status" value="1"/>
</dbReference>
<dbReference type="InterPro" id="IPR020708">
    <property type="entry name" value="DNA-dir_RNA_polK_14-18kDa_CS"/>
</dbReference>
<dbReference type="InterPro" id="IPR006110">
    <property type="entry name" value="Pol_omega/Rpo6/RPB6"/>
</dbReference>
<dbReference type="InterPro" id="IPR036161">
    <property type="entry name" value="RPB6/omega-like_sf"/>
</dbReference>
<dbReference type="InterPro" id="IPR006111">
    <property type="entry name" value="Rpo6/Rpb6"/>
</dbReference>
<dbReference type="NCBIfam" id="NF002207">
    <property type="entry name" value="PRK01099.1-2"/>
    <property type="match status" value="1"/>
</dbReference>
<dbReference type="NCBIfam" id="NF002208">
    <property type="entry name" value="PRK01099.1-3"/>
    <property type="match status" value="1"/>
</dbReference>
<dbReference type="NCBIfam" id="NF002209">
    <property type="entry name" value="PRK01099.1-4"/>
    <property type="match status" value="1"/>
</dbReference>
<dbReference type="PANTHER" id="PTHR47227">
    <property type="entry name" value="DNA-DIRECTED RNA POLYMERASE SUBUNIT K"/>
    <property type="match status" value="1"/>
</dbReference>
<dbReference type="PANTHER" id="PTHR47227:SF5">
    <property type="entry name" value="DNA-DIRECTED RNA POLYMERASES I, II, AND III SUBUNIT RPABC2"/>
    <property type="match status" value="1"/>
</dbReference>
<dbReference type="Pfam" id="PF01192">
    <property type="entry name" value="RNA_pol_Rpb6"/>
    <property type="match status" value="1"/>
</dbReference>
<dbReference type="SMART" id="SM01409">
    <property type="entry name" value="RNA_pol_Rpb6"/>
    <property type="match status" value="1"/>
</dbReference>
<dbReference type="SUPFAM" id="SSF63562">
    <property type="entry name" value="RPB6/omega subunit-like"/>
    <property type="match status" value="1"/>
</dbReference>
<dbReference type="PROSITE" id="PS01111">
    <property type="entry name" value="RNA_POL_K_14KD"/>
    <property type="match status" value="1"/>
</dbReference>
<feature type="chain" id="PRO_0000133823" description="DNA-directed RNA polymerase subunit Rpo6">
    <location>
        <begin position="1"/>
        <end position="95"/>
    </location>
</feature>
<feature type="helix" evidence="6">
    <location>
        <begin position="14"/>
        <end position="22"/>
    </location>
</feature>
<feature type="helix" evidence="6">
    <location>
        <begin position="29"/>
        <end position="44"/>
    </location>
</feature>
<feature type="strand" evidence="6">
    <location>
        <begin position="55"/>
        <end position="58"/>
    </location>
</feature>
<feature type="strand" evidence="6">
    <location>
        <begin position="60"/>
        <end position="63"/>
    </location>
</feature>
<feature type="turn" evidence="6">
    <location>
        <begin position="64"/>
        <end position="66"/>
    </location>
</feature>
<feature type="helix" evidence="6">
    <location>
        <begin position="67"/>
        <end position="70"/>
    </location>
</feature>
<feature type="strand" evidence="6">
    <location>
        <begin position="77"/>
        <end position="81"/>
    </location>
</feature>
<feature type="strand" evidence="6">
    <location>
        <begin position="87"/>
        <end position="90"/>
    </location>
</feature>
<reference key="1">
    <citation type="journal article" date="2001" name="Proc. Natl. Acad. Sci. U.S.A.">
        <title>The complete genome of the crenarchaeon Sulfolobus solfataricus P2.</title>
        <authorList>
            <person name="She Q."/>
            <person name="Singh R.K."/>
            <person name="Confalonieri F."/>
            <person name="Zivanovic Y."/>
            <person name="Allard G."/>
            <person name="Awayez M.J."/>
            <person name="Chan-Weiher C.C.-Y."/>
            <person name="Clausen I.G."/>
            <person name="Curtis B.A."/>
            <person name="De Moors A."/>
            <person name="Erauso G."/>
            <person name="Fletcher C."/>
            <person name="Gordon P.M.K."/>
            <person name="Heikamp-de Jong I."/>
            <person name="Jeffries A.C."/>
            <person name="Kozera C.J."/>
            <person name="Medina N."/>
            <person name="Peng X."/>
            <person name="Thi-Ngoc H.P."/>
            <person name="Redder P."/>
            <person name="Schenk M.E."/>
            <person name="Theriault C."/>
            <person name="Tolstrup N."/>
            <person name="Charlebois R.L."/>
            <person name="Doolittle W.F."/>
            <person name="Duguet M."/>
            <person name="Gaasterland T."/>
            <person name="Garrett R.A."/>
            <person name="Ragan M.A."/>
            <person name="Sensen C.W."/>
            <person name="Van der Oost J."/>
        </authorList>
    </citation>
    <scope>NUCLEOTIDE SEQUENCE [LARGE SCALE GENOMIC DNA]</scope>
    <source>
        <strain>ATCC 35092 / DSM 1617 / JCM 11322 / P2</strain>
    </source>
</reference>
<reference evidence="4 5" key="2">
    <citation type="journal article" date="2008" name="Nature">
        <title>The X-ray crystal structure of RNA polymerase from Archaea.</title>
        <authorList>
            <person name="Hirata A."/>
            <person name="Klein B.J."/>
            <person name="Murakami K.S."/>
        </authorList>
    </citation>
    <scope>X-RAY CRYSTALLOGRAPHY (3.4 ANGSTROMS) OF THE RNA POLYMERASE COMPLEX</scope>
    <scope>SUBUNIT</scope>
    <source>
        <strain>ATCC 35092 / DSM 1617 / JCM 11322 / P2</strain>
    </source>
</reference>
<protein>
    <recommendedName>
        <fullName evidence="1">DNA-directed RNA polymerase subunit Rpo6</fullName>
        <ecNumber evidence="1">2.7.7.6</ecNumber>
    </recommendedName>
    <alternativeName>
        <fullName evidence="1 3">DNA-directed RNA polymerase subunit K</fullName>
    </alternativeName>
</protein>
<proteinExistence type="evidence at protein level"/>
<comment type="function">
    <text evidence="1">DNA-dependent RNA polymerase (RNAP) catalyzes the transcription of DNA into RNA using the four ribonucleoside triphosphates as substrates.</text>
</comment>
<comment type="catalytic activity">
    <reaction evidence="1">
        <text>RNA(n) + a ribonucleoside 5'-triphosphate = RNA(n+1) + diphosphate</text>
        <dbReference type="Rhea" id="RHEA:21248"/>
        <dbReference type="Rhea" id="RHEA-COMP:14527"/>
        <dbReference type="Rhea" id="RHEA-COMP:17342"/>
        <dbReference type="ChEBI" id="CHEBI:33019"/>
        <dbReference type="ChEBI" id="CHEBI:61557"/>
        <dbReference type="ChEBI" id="CHEBI:140395"/>
        <dbReference type="EC" id="2.7.7.6"/>
    </reaction>
</comment>
<comment type="subunit">
    <text evidence="2">Part of the 13-subunit RNA polymerase complex.</text>
</comment>
<comment type="subcellular location">
    <subcellularLocation>
        <location evidence="1">Cytoplasm</location>
    </subcellularLocation>
</comment>
<comment type="similarity">
    <text evidence="1">Belongs to the archaeal Rpo6/eukaryotic RPB6 RNA polymerase subunit family.</text>
</comment>